<comment type="function">
    <text evidence="1">Promotes RNA polymerase assembly. Latches the N- and C-terminal regions of the beta' subunit thereby facilitating its interaction with the beta and alpha subunits.</text>
</comment>
<comment type="catalytic activity">
    <reaction evidence="1">
        <text>RNA(n) + a ribonucleoside 5'-triphosphate = RNA(n+1) + diphosphate</text>
        <dbReference type="Rhea" id="RHEA:21248"/>
        <dbReference type="Rhea" id="RHEA-COMP:14527"/>
        <dbReference type="Rhea" id="RHEA-COMP:17342"/>
        <dbReference type="ChEBI" id="CHEBI:33019"/>
        <dbReference type="ChEBI" id="CHEBI:61557"/>
        <dbReference type="ChEBI" id="CHEBI:140395"/>
        <dbReference type="EC" id="2.7.7.6"/>
    </reaction>
</comment>
<comment type="subunit">
    <text evidence="1">The RNAP catalytic core consists of 2 alpha, 1 beta, 1 beta' and 1 omega subunit. When a sigma factor is associated with the core the holoenzyme is formed, which can initiate transcription.</text>
</comment>
<comment type="similarity">
    <text evidence="1">Belongs to the RNA polymerase subunit omega family.</text>
</comment>
<protein>
    <recommendedName>
        <fullName evidence="1">DNA-directed RNA polymerase subunit omega</fullName>
        <shortName evidence="1">RNAP omega subunit</shortName>
        <ecNumber evidence="1">2.7.7.6</ecNumber>
    </recommendedName>
    <alternativeName>
        <fullName evidence="1">RNA polymerase omega subunit</fullName>
    </alternativeName>
    <alternativeName>
        <fullName evidence="1">Transcriptase subunit omega</fullName>
    </alternativeName>
</protein>
<proteinExistence type="inferred from homology"/>
<reference key="1">
    <citation type="submission" date="2007-06" db="EMBL/GenBank/DDBJ databases">
        <authorList>
            <person name="Brinkac L.M."/>
            <person name="Daugherty S."/>
            <person name="Dodson R.J."/>
            <person name="Madupu R."/>
            <person name="Brown J.L."/>
            <person name="Bruce D."/>
            <person name="Detter C."/>
            <person name="Munk C."/>
            <person name="Smith L.A."/>
            <person name="Smith T.J."/>
            <person name="White O."/>
            <person name="Brettin T.S."/>
        </authorList>
    </citation>
    <scope>NUCLEOTIDE SEQUENCE [LARGE SCALE GENOMIC DNA]</scope>
    <source>
        <strain>Langeland / NCTC 10281 / Type F</strain>
    </source>
</reference>
<accession>A7GG99</accession>
<dbReference type="EC" id="2.7.7.6" evidence="1"/>
<dbReference type="EMBL" id="CP000728">
    <property type="protein sequence ID" value="ABS39432.1"/>
    <property type="molecule type" value="Genomic_DNA"/>
</dbReference>
<dbReference type="RefSeq" id="WP_003388622.1">
    <property type="nucleotide sequence ID" value="NC_009699.1"/>
</dbReference>
<dbReference type="SMR" id="A7GG99"/>
<dbReference type="GeneID" id="92939254"/>
<dbReference type="KEGG" id="cbf:CLI_2574"/>
<dbReference type="HOGENOM" id="CLU_125406_6_1_9"/>
<dbReference type="Proteomes" id="UP000002410">
    <property type="component" value="Chromosome"/>
</dbReference>
<dbReference type="GO" id="GO:0000428">
    <property type="term" value="C:DNA-directed RNA polymerase complex"/>
    <property type="evidence" value="ECO:0007669"/>
    <property type="project" value="UniProtKB-KW"/>
</dbReference>
<dbReference type="GO" id="GO:0003677">
    <property type="term" value="F:DNA binding"/>
    <property type="evidence" value="ECO:0007669"/>
    <property type="project" value="UniProtKB-UniRule"/>
</dbReference>
<dbReference type="GO" id="GO:0003899">
    <property type="term" value="F:DNA-directed RNA polymerase activity"/>
    <property type="evidence" value="ECO:0007669"/>
    <property type="project" value="UniProtKB-UniRule"/>
</dbReference>
<dbReference type="GO" id="GO:0006351">
    <property type="term" value="P:DNA-templated transcription"/>
    <property type="evidence" value="ECO:0007669"/>
    <property type="project" value="UniProtKB-UniRule"/>
</dbReference>
<dbReference type="Gene3D" id="3.90.940.10">
    <property type="match status" value="1"/>
</dbReference>
<dbReference type="HAMAP" id="MF_00366">
    <property type="entry name" value="RNApol_bact_RpoZ"/>
    <property type="match status" value="1"/>
</dbReference>
<dbReference type="InterPro" id="IPR003716">
    <property type="entry name" value="DNA-dir_RNA_pol_omega"/>
</dbReference>
<dbReference type="InterPro" id="IPR006110">
    <property type="entry name" value="Pol_omega/Rpo6/RPB6"/>
</dbReference>
<dbReference type="InterPro" id="IPR036161">
    <property type="entry name" value="RPB6/omega-like_sf"/>
</dbReference>
<dbReference type="NCBIfam" id="TIGR00690">
    <property type="entry name" value="rpoZ"/>
    <property type="match status" value="1"/>
</dbReference>
<dbReference type="PANTHER" id="PTHR34476">
    <property type="entry name" value="DNA-DIRECTED RNA POLYMERASE SUBUNIT OMEGA"/>
    <property type="match status" value="1"/>
</dbReference>
<dbReference type="PANTHER" id="PTHR34476:SF1">
    <property type="entry name" value="DNA-DIRECTED RNA POLYMERASE SUBUNIT OMEGA"/>
    <property type="match status" value="1"/>
</dbReference>
<dbReference type="Pfam" id="PF01192">
    <property type="entry name" value="RNA_pol_Rpb6"/>
    <property type="match status" value="1"/>
</dbReference>
<dbReference type="SMART" id="SM01409">
    <property type="entry name" value="RNA_pol_Rpb6"/>
    <property type="match status" value="1"/>
</dbReference>
<dbReference type="SUPFAM" id="SSF63562">
    <property type="entry name" value="RPB6/omega subunit-like"/>
    <property type="match status" value="1"/>
</dbReference>
<gene>
    <name evidence="1" type="primary">rpoZ</name>
    <name type="ordered locus">CLI_2574</name>
</gene>
<organism>
    <name type="scientific">Clostridium botulinum (strain Langeland / NCTC 10281 / Type F)</name>
    <dbReference type="NCBI Taxonomy" id="441772"/>
    <lineage>
        <taxon>Bacteria</taxon>
        <taxon>Bacillati</taxon>
        <taxon>Bacillota</taxon>
        <taxon>Clostridia</taxon>
        <taxon>Eubacteriales</taxon>
        <taxon>Clostridiaceae</taxon>
        <taxon>Clostridium</taxon>
    </lineage>
</organism>
<keyword id="KW-0240">DNA-directed RNA polymerase</keyword>
<keyword id="KW-0548">Nucleotidyltransferase</keyword>
<keyword id="KW-0804">Transcription</keyword>
<keyword id="KW-0808">Transferase</keyword>
<name>RPOZ_CLOBL</name>
<feature type="chain" id="PRO_1000005913" description="DNA-directed RNA polymerase subunit omega">
    <location>
        <begin position="1"/>
        <end position="72"/>
    </location>
</feature>
<evidence type="ECO:0000255" key="1">
    <source>
        <dbReference type="HAMAP-Rule" id="MF_00366"/>
    </source>
</evidence>
<sequence>MSNSMINPSIVNLLEKVDDRYSLVTITSKRSRQLIDGAKPLVDIDSTKPVTVAINEIHEGKITYKTVKEGIK</sequence>